<name>TGT_RICCN</name>
<comment type="function">
    <text evidence="1">Catalyzes the base-exchange of a guanine (G) residue with the queuine precursor 7-aminomethyl-7-deazaguanine (PreQ1) at position 34 (anticodon wobble position) in tRNAs with GU(N) anticodons (tRNA-Asp, -Asn, -His and -Tyr). Catalysis occurs through a double-displacement mechanism. The nucleophile active site attacks the C1' of nucleotide 34 to detach the guanine base from the RNA, forming a covalent enzyme-RNA intermediate. The proton acceptor active site deprotonates the incoming PreQ1, allowing a nucleophilic attack on the C1' of the ribose to form the product. After dissociation, two additional enzymatic reactions on the tRNA convert PreQ1 to queuine (Q), resulting in the hypermodified nucleoside queuosine (7-(((4,5-cis-dihydroxy-2-cyclopenten-1-yl)amino)methyl)-7-deazaguanosine).</text>
</comment>
<comment type="catalytic activity">
    <reaction evidence="1">
        <text>7-aminomethyl-7-carbaguanine + guanosine(34) in tRNA = 7-aminomethyl-7-carbaguanosine(34) in tRNA + guanine</text>
        <dbReference type="Rhea" id="RHEA:24104"/>
        <dbReference type="Rhea" id="RHEA-COMP:10341"/>
        <dbReference type="Rhea" id="RHEA-COMP:10342"/>
        <dbReference type="ChEBI" id="CHEBI:16235"/>
        <dbReference type="ChEBI" id="CHEBI:58703"/>
        <dbReference type="ChEBI" id="CHEBI:74269"/>
        <dbReference type="ChEBI" id="CHEBI:82833"/>
        <dbReference type="EC" id="2.4.2.29"/>
    </reaction>
</comment>
<comment type="cofactor">
    <cofactor evidence="1">
        <name>Zn(2+)</name>
        <dbReference type="ChEBI" id="CHEBI:29105"/>
    </cofactor>
    <text evidence="1">Binds 1 zinc ion per subunit.</text>
</comment>
<comment type="pathway">
    <text evidence="1">tRNA modification; tRNA-queuosine biosynthesis.</text>
</comment>
<comment type="subunit">
    <text evidence="1">Homodimer. Within each dimer, one monomer is responsible for RNA recognition and catalysis, while the other monomer binds to the replacement base PreQ1.</text>
</comment>
<comment type="similarity">
    <text evidence="1">Belongs to the queuine tRNA-ribosyltransferase family.</text>
</comment>
<accession>Q92GM6</accession>
<feature type="chain" id="PRO_0000135513" description="Queuine tRNA-ribosyltransferase">
    <location>
        <begin position="1"/>
        <end position="361"/>
    </location>
</feature>
<feature type="region of interest" description="RNA binding" evidence="1">
    <location>
        <begin position="247"/>
        <end position="253"/>
    </location>
</feature>
<feature type="region of interest" description="RNA binding; important for wobble base 34 recognition" evidence="1">
    <location>
        <begin position="271"/>
        <end position="275"/>
    </location>
</feature>
<feature type="active site" description="Proton acceptor" evidence="1">
    <location>
        <position position="92"/>
    </location>
</feature>
<feature type="active site" description="Nucleophile" evidence="1">
    <location>
        <position position="266"/>
    </location>
</feature>
<feature type="binding site" evidence="1">
    <location>
        <begin position="92"/>
        <end position="96"/>
    </location>
    <ligand>
        <name>substrate</name>
    </ligand>
</feature>
<feature type="binding site" evidence="1">
    <location>
        <position position="146"/>
    </location>
    <ligand>
        <name>substrate</name>
    </ligand>
</feature>
<feature type="binding site" evidence="1">
    <location>
        <position position="189"/>
    </location>
    <ligand>
        <name>substrate</name>
    </ligand>
</feature>
<feature type="binding site" evidence="1">
    <location>
        <position position="216"/>
    </location>
    <ligand>
        <name>substrate</name>
    </ligand>
</feature>
<feature type="binding site" evidence="1">
    <location>
        <position position="304"/>
    </location>
    <ligand>
        <name>Zn(2+)</name>
        <dbReference type="ChEBI" id="CHEBI:29105"/>
    </ligand>
</feature>
<feature type="binding site" evidence="1">
    <location>
        <position position="306"/>
    </location>
    <ligand>
        <name>Zn(2+)</name>
        <dbReference type="ChEBI" id="CHEBI:29105"/>
    </ligand>
</feature>
<feature type="binding site" evidence="1">
    <location>
        <position position="309"/>
    </location>
    <ligand>
        <name>Zn(2+)</name>
        <dbReference type="ChEBI" id="CHEBI:29105"/>
    </ligand>
</feature>
<feature type="binding site" evidence="1">
    <location>
        <position position="335"/>
    </location>
    <ligand>
        <name>Zn(2+)</name>
        <dbReference type="ChEBI" id="CHEBI:29105"/>
    </ligand>
</feature>
<dbReference type="EC" id="2.4.2.29" evidence="1"/>
<dbReference type="EMBL" id="AE006914">
    <property type="protein sequence ID" value="AAL03635.1"/>
    <property type="molecule type" value="Genomic_DNA"/>
</dbReference>
<dbReference type="PIR" id="A97837">
    <property type="entry name" value="A97837"/>
</dbReference>
<dbReference type="RefSeq" id="WP_004997587.1">
    <property type="nucleotide sequence ID" value="NC_003103.1"/>
</dbReference>
<dbReference type="SMR" id="Q92GM6"/>
<dbReference type="GeneID" id="95361547"/>
<dbReference type="KEGG" id="rco:RC1097"/>
<dbReference type="HOGENOM" id="CLU_022060_0_1_5"/>
<dbReference type="UniPathway" id="UPA00392"/>
<dbReference type="Proteomes" id="UP000000816">
    <property type="component" value="Chromosome"/>
</dbReference>
<dbReference type="GO" id="GO:0005737">
    <property type="term" value="C:cytoplasm"/>
    <property type="evidence" value="ECO:0007669"/>
    <property type="project" value="TreeGrafter"/>
</dbReference>
<dbReference type="GO" id="GO:0046872">
    <property type="term" value="F:metal ion binding"/>
    <property type="evidence" value="ECO:0007669"/>
    <property type="project" value="UniProtKB-KW"/>
</dbReference>
<dbReference type="GO" id="GO:0008479">
    <property type="term" value="F:tRNA-guanosine(34) queuine transglycosylase activity"/>
    <property type="evidence" value="ECO:0007669"/>
    <property type="project" value="UniProtKB-UniRule"/>
</dbReference>
<dbReference type="GO" id="GO:0008616">
    <property type="term" value="P:queuosine biosynthetic process"/>
    <property type="evidence" value="ECO:0007669"/>
    <property type="project" value="UniProtKB-UniRule"/>
</dbReference>
<dbReference type="GO" id="GO:0002099">
    <property type="term" value="P:tRNA wobble guanine modification"/>
    <property type="evidence" value="ECO:0007669"/>
    <property type="project" value="TreeGrafter"/>
</dbReference>
<dbReference type="GO" id="GO:0101030">
    <property type="term" value="P:tRNA-guanine transglycosylation"/>
    <property type="evidence" value="ECO:0007669"/>
    <property type="project" value="InterPro"/>
</dbReference>
<dbReference type="FunFam" id="3.20.20.105:FF:000001">
    <property type="entry name" value="Queuine tRNA-ribosyltransferase"/>
    <property type="match status" value="1"/>
</dbReference>
<dbReference type="Gene3D" id="3.20.20.105">
    <property type="entry name" value="Queuine tRNA-ribosyltransferase-like"/>
    <property type="match status" value="1"/>
</dbReference>
<dbReference type="HAMAP" id="MF_00168">
    <property type="entry name" value="Q_tRNA_Tgt"/>
    <property type="match status" value="1"/>
</dbReference>
<dbReference type="InterPro" id="IPR050076">
    <property type="entry name" value="ArchSynthase1/Queuine_TRR"/>
</dbReference>
<dbReference type="InterPro" id="IPR004803">
    <property type="entry name" value="TGT"/>
</dbReference>
<dbReference type="InterPro" id="IPR036511">
    <property type="entry name" value="TGT-like_sf"/>
</dbReference>
<dbReference type="InterPro" id="IPR002616">
    <property type="entry name" value="tRNA_ribo_trans-like"/>
</dbReference>
<dbReference type="NCBIfam" id="TIGR00430">
    <property type="entry name" value="Q_tRNA_tgt"/>
    <property type="match status" value="1"/>
</dbReference>
<dbReference type="NCBIfam" id="TIGR00449">
    <property type="entry name" value="tgt_general"/>
    <property type="match status" value="1"/>
</dbReference>
<dbReference type="PANTHER" id="PTHR46499">
    <property type="entry name" value="QUEUINE TRNA-RIBOSYLTRANSFERASE"/>
    <property type="match status" value="1"/>
</dbReference>
<dbReference type="PANTHER" id="PTHR46499:SF1">
    <property type="entry name" value="QUEUINE TRNA-RIBOSYLTRANSFERASE"/>
    <property type="match status" value="1"/>
</dbReference>
<dbReference type="Pfam" id="PF01702">
    <property type="entry name" value="TGT"/>
    <property type="match status" value="1"/>
</dbReference>
<dbReference type="SUPFAM" id="SSF51713">
    <property type="entry name" value="tRNA-guanine transglycosylase"/>
    <property type="match status" value="1"/>
</dbReference>
<protein>
    <recommendedName>
        <fullName evidence="1">Queuine tRNA-ribosyltransferase</fullName>
        <ecNumber evidence="1">2.4.2.29</ecNumber>
    </recommendedName>
    <alternativeName>
        <fullName evidence="1">Guanine insertion enzyme</fullName>
    </alternativeName>
    <alternativeName>
        <fullName evidence="1">tRNA-guanine transglycosylase</fullName>
    </alternativeName>
</protein>
<organism>
    <name type="scientific">Rickettsia conorii (strain ATCC VR-613 / Malish 7)</name>
    <dbReference type="NCBI Taxonomy" id="272944"/>
    <lineage>
        <taxon>Bacteria</taxon>
        <taxon>Pseudomonadati</taxon>
        <taxon>Pseudomonadota</taxon>
        <taxon>Alphaproteobacteria</taxon>
        <taxon>Rickettsiales</taxon>
        <taxon>Rickettsiaceae</taxon>
        <taxon>Rickettsieae</taxon>
        <taxon>Rickettsia</taxon>
        <taxon>spotted fever group</taxon>
    </lineage>
</organism>
<gene>
    <name evidence="1" type="primary">tgt</name>
    <name type="ordered locus">RC1097</name>
</gene>
<proteinExistence type="inferred from homology"/>
<keyword id="KW-0328">Glycosyltransferase</keyword>
<keyword id="KW-0479">Metal-binding</keyword>
<keyword id="KW-0671">Queuosine biosynthesis</keyword>
<keyword id="KW-0808">Transferase</keyword>
<keyword id="KW-0819">tRNA processing</keyword>
<keyword id="KW-0862">Zinc</keyword>
<evidence type="ECO:0000255" key="1">
    <source>
        <dbReference type="HAMAP-Rule" id="MF_00168"/>
    </source>
</evidence>
<sequence>MSKFSFNIHHQHKKARSGIIVTAHGEMRTPAFMPVGTRGTVKAMLPESVAETGADILLGNTYHLMLQPTAERIVQLGGLHKFMNWDKPILTDSGGFQVMSLSKLCKITEEGVSFSSHINGDKYMLTPERSTEIQYLLGSTITMAFDECTPYPATFEEAKTSMQLTTRWANRSRNAFVKREGYAQFGIIQGSVYEELREQSAKDLVELDFEGYAIGGLAVGEGQELMFKVLDYAPEFLPQNKPRYLMGVGKPVDIIGAVSRGIDMFDCVIPTRSGRNGQAFTKYGTVNIRNSKYADDNKPLEHDCLCPACRNYSKAYLHHLVRIGEILGSMLMTWHNLTYFQNLMSRIRAYIKLGKDFDFDS</sequence>
<reference key="1">
    <citation type="journal article" date="2001" name="Science">
        <title>Mechanisms of evolution in Rickettsia conorii and R. prowazekii.</title>
        <authorList>
            <person name="Ogata H."/>
            <person name="Audic S."/>
            <person name="Renesto-Audiffren P."/>
            <person name="Fournier P.-E."/>
            <person name="Barbe V."/>
            <person name="Samson D."/>
            <person name="Roux V."/>
            <person name="Cossart P."/>
            <person name="Weissenbach J."/>
            <person name="Claverie J.-M."/>
            <person name="Raoult D."/>
        </authorList>
    </citation>
    <scope>NUCLEOTIDE SEQUENCE [LARGE SCALE GENOMIC DNA]</scope>
    <source>
        <strain>ATCC VR-613 / Malish 7</strain>
    </source>
</reference>